<dbReference type="EC" id="3.6.5.-" evidence="1"/>
<dbReference type="EMBL" id="CM000208">
    <property type="protein sequence ID" value="EAN78819.1"/>
    <property type="molecule type" value="Genomic_DNA"/>
</dbReference>
<dbReference type="RefSeq" id="XP_827931.1">
    <property type="nucleotide sequence ID" value="XM_822838.1"/>
</dbReference>
<dbReference type="SMR" id="Q388F1"/>
<dbReference type="STRING" id="185431.Q388F1"/>
<dbReference type="PaxDb" id="5691-EAN78819"/>
<dbReference type="GeneID" id="3662737"/>
<dbReference type="KEGG" id="tbr:Tb10.61.2200"/>
<dbReference type="VEuPathDB" id="TriTrypDB:Tb927.10.14510"/>
<dbReference type="eggNOG" id="KOG2203">
    <property type="taxonomic scope" value="Eukaryota"/>
</dbReference>
<dbReference type="InParanoid" id="Q388F1"/>
<dbReference type="OMA" id="YHVVGVF"/>
<dbReference type="OrthoDB" id="1597724at2759"/>
<dbReference type="Proteomes" id="UP000008524">
    <property type="component" value="Chromosome 10"/>
</dbReference>
<dbReference type="GO" id="GO:0005737">
    <property type="term" value="C:cytoplasm"/>
    <property type="evidence" value="ECO:0000314"/>
    <property type="project" value="GeneDB"/>
</dbReference>
<dbReference type="GO" id="GO:0005783">
    <property type="term" value="C:endoplasmic reticulum"/>
    <property type="evidence" value="ECO:0000318"/>
    <property type="project" value="GO_Central"/>
</dbReference>
<dbReference type="GO" id="GO:0005789">
    <property type="term" value="C:endoplasmic reticulum membrane"/>
    <property type="evidence" value="ECO:0007669"/>
    <property type="project" value="UniProtKB-SubCell"/>
</dbReference>
<dbReference type="GO" id="GO:0005739">
    <property type="term" value="C:mitochondrion"/>
    <property type="evidence" value="ECO:0000314"/>
    <property type="project" value="GeneDB"/>
</dbReference>
<dbReference type="GO" id="GO:0005525">
    <property type="term" value="F:GTP binding"/>
    <property type="evidence" value="ECO:0007669"/>
    <property type="project" value="UniProtKB-UniRule"/>
</dbReference>
<dbReference type="GO" id="GO:0003924">
    <property type="term" value="F:GTPase activity"/>
    <property type="evidence" value="ECO:0000318"/>
    <property type="project" value="GO_Central"/>
</dbReference>
<dbReference type="GO" id="GO:0016320">
    <property type="term" value="P:endoplasmic reticulum membrane fusion"/>
    <property type="evidence" value="ECO:0000318"/>
    <property type="project" value="GO_Central"/>
</dbReference>
<dbReference type="CDD" id="cd01851">
    <property type="entry name" value="GBP"/>
    <property type="match status" value="1"/>
</dbReference>
<dbReference type="Gene3D" id="3.40.50.300">
    <property type="entry name" value="P-loop containing nucleotide triphosphate hydrolases"/>
    <property type="match status" value="1"/>
</dbReference>
<dbReference type="HAMAP" id="MF_03109">
    <property type="entry name" value="Sey1"/>
    <property type="match status" value="1"/>
</dbReference>
<dbReference type="InterPro" id="IPR030386">
    <property type="entry name" value="G_GB1_RHD3_dom"/>
</dbReference>
<dbReference type="InterPro" id="IPR027417">
    <property type="entry name" value="P-loop_NTPase"/>
</dbReference>
<dbReference type="InterPro" id="IPR008803">
    <property type="entry name" value="RHD3/Sey1"/>
</dbReference>
<dbReference type="InterPro" id="IPR046758">
    <property type="entry name" value="Sey1/RHD3-like_3HB"/>
</dbReference>
<dbReference type="PANTHER" id="PTHR45923">
    <property type="entry name" value="PROTEIN SEY1"/>
    <property type="match status" value="1"/>
</dbReference>
<dbReference type="PANTHER" id="PTHR45923:SF2">
    <property type="entry name" value="PROTEIN SEY1"/>
    <property type="match status" value="1"/>
</dbReference>
<dbReference type="Pfam" id="PF05879">
    <property type="entry name" value="RHD3_GTPase"/>
    <property type="match status" value="1"/>
</dbReference>
<dbReference type="Pfam" id="PF20428">
    <property type="entry name" value="Sey1_3HB"/>
    <property type="match status" value="1"/>
</dbReference>
<dbReference type="SUPFAM" id="SSF52540">
    <property type="entry name" value="P-loop containing nucleoside triphosphate hydrolases"/>
    <property type="match status" value="1"/>
</dbReference>
<dbReference type="PROSITE" id="PS51715">
    <property type="entry name" value="G_GB1_RHD3"/>
    <property type="match status" value="1"/>
</dbReference>
<protein>
    <recommendedName>
        <fullName evidence="1">Protein SEY1 homolog</fullName>
        <ecNumber evidence="1">3.6.5.-</ecNumber>
    </recommendedName>
</protein>
<keyword id="KW-0175">Coiled coil</keyword>
<keyword id="KW-0256">Endoplasmic reticulum</keyword>
<keyword id="KW-0342">GTP-binding</keyword>
<keyword id="KW-0378">Hydrolase</keyword>
<keyword id="KW-0472">Membrane</keyword>
<keyword id="KW-0547">Nucleotide-binding</keyword>
<keyword id="KW-1185">Reference proteome</keyword>
<keyword id="KW-0812">Transmembrane</keyword>
<keyword id="KW-1133">Transmembrane helix</keyword>
<reference key="1">
    <citation type="journal article" date="2005" name="Science">
        <title>The genome of the African trypanosome Trypanosoma brucei.</title>
        <authorList>
            <person name="Berriman M."/>
            <person name="Ghedin E."/>
            <person name="Hertz-Fowler C."/>
            <person name="Blandin G."/>
            <person name="Renauld H."/>
            <person name="Bartholomeu D.C."/>
            <person name="Lennard N.J."/>
            <person name="Caler E."/>
            <person name="Hamlin N.E."/>
            <person name="Haas B."/>
            <person name="Bohme U."/>
            <person name="Hannick L."/>
            <person name="Aslett M.A."/>
            <person name="Shallom J."/>
            <person name="Marcello L."/>
            <person name="Hou L."/>
            <person name="Wickstead B."/>
            <person name="Alsmark U.C.M."/>
            <person name="Arrowsmith C."/>
            <person name="Atkin R.J."/>
            <person name="Barron A.J."/>
            <person name="Bringaud F."/>
            <person name="Brooks K."/>
            <person name="Carrington M."/>
            <person name="Cherevach I."/>
            <person name="Chillingworth T.J."/>
            <person name="Churcher C."/>
            <person name="Clark L.N."/>
            <person name="Corton C.H."/>
            <person name="Cronin A."/>
            <person name="Davies R.M."/>
            <person name="Doggett J."/>
            <person name="Djikeng A."/>
            <person name="Feldblyum T."/>
            <person name="Field M.C."/>
            <person name="Fraser A."/>
            <person name="Goodhead I."/>
            <person name="Hance Z."/>
            <person name="Harper D."/>
            <person name="Harris B.R."/>
            <person name="Hauser H."/>
            <person name="Hostetler J."/>
            <person name="Ivens A."/>
            <person name="Jagels K."/>
            <person name="Johnson D."/>
            <person name="Johnson J."/>
            <person name="Jones K."/>
            <person name="Kerhornou A.X."/>
            <person name="Koo H."/>
            <person name="Larke N."/>
            <person name="Landfear S."/>
            <person name="Larkin C."/>
            <person name="Leech V."/>
            <person name="Line A."/>
            <person name="Lord A."/>
            <person name="Macleod A."/>
            <person name="Mooney P.J."/>
            <person name="Moule S."/>
            <person name="Martin D.M."/>
            <person name="Morgan G.W."/>
            <person name="Mungall K."/>
            <person name="Norbertczak H."/>
            <person name="Ormond D."/>
            <person name="Pai G."/>
            <person name="Peacock C.S."/>
            <person name="Peterson J."/>
            <person name="Quail M.A."/>
            <person name="Rabbinowitsch E."/>
            <person name="Rajandream M.A."/>
            <person name="Reitter C."/>
            <person name="Salzberg S.L."/>
            <person name="Sanders M."/>
            <person name="Schobel S."/>
            <person name="Sharp S."/>
            <person name="Simmonds M."/>
            <person name="Simpson A.J."/>
            <person name="Tallon L."/>
            <person name="Turner C.M."/>
            <person name="Tait A."/>
            <person name="Tivey A.R."/>
            <person name="Van Aken S."/>
            <person name="Walker D."/>
            <person name="Wanless D."/>
            <person name="Wang S."/>
            <person name="White B."/>
            <person name="White O."/>
            <person name="Whitehead S."/>
            <person name="Woodward J."/>
            <person name="Wortman J."/>
            <person name="Adams M.D."/>
            <person name="Embley T.M."/>
            <person name="Gull K."/>
            <person name="Ullu E."/>
            <person name="Barry J.D."/>
            <person name="Fairlamb A.H."/>
            <person name="Opperdoes F."/>
            <person name="Barrell B.G."/>
            <person name="Donelson J.E."/>
            <person name="Hall N."/>
            <person name="Fraser C.M."/>
            <person name="Melville S.E."/>
            <person name="El-Sayed N.M.A."/>
        </authorList>
    </citation>
    <scope>NUCLEOTIDE SEQUENCE [LARGE SCALE GENOMIC DNA]</scope>
    <source>
        <strain evidence="4">927/4 GUTat10.1</strain>
    </source>
</reference>
<evidence type="ECO:0000255" key="1">
    <source>
        <dbReference type="HAMAP-Rule" id="MF_03109"/>
    </source>
</evidence>
<evidence type="ECO:0000255" key="2">
    <source>
        <dbReference type="PROSITE-ProRule" id="PRU01052"/>
    </source>
</evidence>
<evidence type="ECO:0000256" key="3">
    <source>
        <dbReference type="SAM" id="MobiDB-lite"/>
    </source>
</evidence>
<evidence type="ECO:0000312" key="4">
    <source>
        <dbReference type="Proteomes" id="UP000008524"/>
    </source>
</evidence>
<feature type="chain" id="PRO_0000384963" description="Protein SEY1 homolog">
    <location>
        <begin position="1"/>
        <end position="854"/>
    </location>
</feature>
<feature type="topological domain" description="Cytoplasmic" evidence="1">
    <location>
        <begin position="1"/>
        <end position="724"/>
    </location>
</feature>
<feature type="transmembrane region" description="Helical" evidence="1">
    <location>
        <begin position="725"/>
        <end position="745"/>
    </location>
</feature>
<feature type="topological domain" description="Lumenal" evidence="1">
    <location>
        <begin position="746"/>
        <end position="748"/>
    </location>
</feature>
<feature type="transmembrane region" description="Helical" evidence="1">
    <location>
        <begin position="749"/>
        <end position="769"/>
    </location>
</feature>
<feature type="topological domain" description="Cytoplasmic" evidence="1">
    <location>
        <begin position="770"/>
        <end position="854"/>
    </location>
</feature>
<feature type="domain" description="GB1/RHD3-type G" evidence="2">
    <location>
        <begin position="49"/>
        <end position="291"/>
    </location>
</feature>
<feature type="region of interest" description="Disordered" evidence="3">
    <location>
        <begin position="808"/>
        <end position="854"/>
    </location>
</feature>
<feature type="coiled-coil region" evidence="1">
    <location>
        <begin position="336"/>
        <end position="386"/>
    </location>
</feature>
<feature type="compositionally biased region" description="Low complexity" evidence="3">
    <location>
        <begin position="822"/>
        <end position="839"/>
    </location>
</feature>
<feature type="compositionally biased region" description="Basic and acidic residues" evidence="3">
    <location>
        <begin position="845"/>
        <end position="854"/>
    </location>
</feature>
<feature type="binding site" evidence="1">
    <location>
        <begin position="59"/>
        <end position="66"/>
    </location>
    <ligand>
        <name>GTP</name>
        <dbReference type="ChEBI" id="CHEBI:37565"/>
    </ligand>
</feature>
<comment type="function">
    <text evidence="1">Probable GTP-binding protein that may be involved in cell development.</text>
</comment>
<comment type="subcellular location">
    <subcellularLocation>
        <location evidence="1">Endoplasmic reticulum membrane</location>
        <topology evidence="1">Multi-pass membrane protein</topology>
    </subcellularLocation>
</comment>
<comment type="similarity">
    <text evidence="2">Belongs to the TRAFAC class dynamin-like GTPase superfamily. GB1/RHD3 GTPase family. RHD3 subfamily.</text>
</comment>
<accession>Q388F1</accession>
<sequence length="854" mass="95106">MAAFSGETAVKGIHLINDDGELLPEADINDFLISALAGKGSSDILYRTGVNYHVVGVFGGQSSGKSTLLNSLFQTEFMTMDEAHHRGQTTKGAFMTRAILDAQTHRKEREEGEGADLLKREKPQPLFVLDFEGTDGIERGEDQNFERQLSLFALSVADILIINMWAVDVGRFNAANMNLLRTVFEVNLQLFSHGSYVKEEKPTLLVVLRDFTENDPAPSFETVRKSFDKIWGNIQKPESFTDATIDVVFDLRYRVLPHYKLQRPEFDSAVSEFREWFVSPKNSNFLFSNCSMFRGVPADGMPSYLSNCWNAICSSKDLDIPTQRDMLARHRCADAKHAAIEEFKEVCEEYTKKIQRGDVIPQFTRALEETIERLLKNFSDQTKLYKVSVVHETAEALEEELGDMELHLLKQYAKSIAVTVLAALDGVIGSSVDEAVRWLQNEARSVLLLEGKDNKGDRIDGGGLAQGVLDTAEGLVDNKRCRLFVEEFWKRICLSLQGAFDMLNGCSKSHQAALSSLYGKFATAIMDDQAVREGVAHAAMEGAQHKLRNRFVAMAENAAETVHQVFEQALTSKTDGTVRFFRTTDGLLGAEKQARQAGLVLLGCLLYYRLKLVPVEVDAGEVEGEGTTRALQRLVRDRCRFQVRDNRTEKNFFLHFTNISDVPRYPLDAPTSVVDSGDTTADTVNADNVLLSHNALQCAFHLYKQKADFTLQMQLRNIESGKQSLPPWVLPVMLLLGWNELYYLLTSPILLIAIIVIAVLFFKTFLKSQLEVLEEKCPVWLVVSVKALLQQAQALQNAYAPTEAVRGGGGGAQFRDPTQATSVSGASAGVSSESSSAASPRRRVCRESRDKGED</sequence>
<gene>
    <name type="ORF">Tb10.61.2200</name>
</gene>
<proteinExistence type="inferred from homology"/>
<name>SEY1_TRYB2</name>
<organism>
    <name type="scientific">Trypanosoma brucei brucei (strain 927/4 GUTat10.1)</name>
    <dbReference type="NCBI Taxonomy" id="185431"/>
    <lineage>
        <taxon>Eukaryota</taxon>
        <taxon>Discoba</taxon>
        <taxon>Euglenozoa</taxon>
        <taxon>Kinetoplastea</taxon>
        <taxon>Metakinetoplastina</taxon>
        <taxon>Trypanosomatida</taxon>
        <taxon>Trypanosomatidae</taxon>
        <taxon>Trypanosoma</taxon>
    </lineage>
</organism>